<evidence type="ECO:0000250" key="1"/>
<evidence type="ECO:0000305" key="2"/>
<accession>P59135</accession>
<sequence>MSRYRGPRVRIIRRLGVLPGLTNKTPQLKTNSINQSISNKKISQYRIRLEEKQKLRFHYGITERQLLNYVRIARKAKGSTGEVLLQLLEMRLDNIIFRLGMAPTIPGARQLVNHRHILVNDRIVNIPSYRCKPEDSITIKDRQKSQAIISKNLNLYQKYKTPNHLTYNFLKKKGLVTQILDRESIGLKINELLVVEYYSRQA</sequence>
<reference key="1">
    <citation type="journal article" date="2002" name="Cryptogam. Bryol.">
        <title>The systematic position of the Hypoptergiaceae (Bryopsida) inferred from rps4 gene sequences.</title>
        <authorList>
            <person name="Bloecher R."/>
            <person name="Capesius I."/>
        </authorList>
    </citation>
    <scope>NUCLEOTIDE SEQUENCE [GENOMIC DNA]</scope>
    <source>
        <tissue>Gametophyte</tissue>
    </source>
</reference>
<organism>
    <name type="scientific">Rosulabryum capillare</name>
    <name type="common">Capillary thread-moss</name>
    <name type="synonym">Bryum capillare</name>
    <dbReference type="NCBI Taxonomy" id="99387"/>
    <lineage>
        <taxon>Eukaryota</taxon>
        <taxon>Viridiplantae</taxon>
        <taxon>Streptophyta</taxon>
        <taxon>Embryophyta</taxon>
        <taxon>Bryophyta</taxon>
        <taxon>Bryophytina</taxon>
        <taxon>Bryopsida</taxon>
        <taxon>Bryidae</taxon>
        <taxon>Bryanae</taxon>
        <taxon>Bryales</taxon>
        <taxon>Bryaceae</taxon>
        <taxon>Ptychostomum</taxon>
    </lineage>
</organism>
<gene>
    <name type="primary">rps4</name>
</gene>
<geneLocation type="chloroplast"/>
<dbReference type="EMBL" id="AJ269691">
    <property type="protein sequence ID" value="CAC80631.1"/>
    <property type="molecule type" value="Genomic_DNA"/>
</dbReference>
<dbReference type="SMR" id="P59135"/>
<dbReference type="GO" id="GO:0009507">
    <property type="term" value="C:chloroplast"/>
    <property type="evidence" value="ECO:0007669"/>
    <property type="project" value="UniProtKB-SubCell"/>
</dbReference>
<dbReference type="GO" id="GO:0015935">
    <property type="term" value="C:small ribosomal subunit"/>
    <property type="evidence" value="ECO:0007669"/>
    <property type="project" value="InterPro"/>
</dbReference>
<dbReference type="GO" id="GO:0019843">
    <property type="term" value="F:rRNA binding"/>
    <property type="evidence" value="ECO:0007669"/>
    <property type="project" value="UniProtKB-UniRule"/>
</dbReference>
<dbReference type="GO" id="GO:0003735">
    <property type="term" value="F:structural constituent of ribosome"/>
    <property type="evidence" value="ECO:0007669"/>
    <property type="project" value="InterPro"/>
</dbReference>
<dbReference type="GO" id="GO:0042274">
    <property type="term" value="P:ribosomal small subunit biogenesis"/>
    <property type="evidence" value="ECO:0007669"/>
    <property type="project" value="TreeGrafter"/>
</dbReference>
<dbReference type="GO" id="GO:0006412">
    <property type="term" value="P:translation"/>
    <property type="evidence" value="ECO:0007669"/>
    <property type="project" value="UniProtKB-UniRule"/>
</dbReference>
<dbReference type="CDD" id="cd00165">
    <property type="entry name" value="S4"/>
    <property type="match status" value="1"/>
</dbReference>
<dbReference type="FunFam" id="1.10.1050.10:FF:000002">
    <property type="entry name" value="30S ribosomal protein S4, chloroplastic"/>
    <property type="match status" value="1"/>
</dbReference>
<dbReference type="FunFam" id="3.10.290.10:FF:000081">
    <property type="entry name" value="30S ribosomal protein S4, chloroplastic"/>
    <property type="match status" value="1"/>
</dbReference>
<dbReference type="Gene3D" id="1.10.1050.10">
    <property type="entry name" value="Ribosomal Protein S4 Delta 41, Chain A, domain 1"/>
    <property type="match status" value="1"/>
</dbReference>
<dbReference type="Gene3D" id="3.10.290.10">
    <property type="entry name" value="RNA-binding S4 domain"/>
    <property type="match status" value="1"/>
</dbReference>
<dbReference type="HAMAP" id="MF_01306_B">
    <property type="entry name" value="Ribosomal_uS4_B"/>
    <property type="match status" value="1"/>
</dbReference>
<dbReference type="InterPro" id="IPR022801">
    <property type="entry name" value="Ribosomal_uS4"/>
</dbReference>
<dbReference type="InterPro" id="IPR005709">
    <property type="entry name" value="Ribosomal_uS4_bac-type"/>
</dbReference>
<dbReference type="InterPro" id="IPR018079">
    <property type="entry name" value="Ribosomal_uS4_CS"/>
</dbReference>
<dbReference type="InterPro" id="IPR001912">
    <property type="entry name" value="Ribosomal_uS4_N"/>
</dbReference>
<dbReference type="InterPro" id="IPR002942">
    <property type="entry name" value="S4_RNA-bd"/>
</dbReference>
<dbReference type="InterPro" id="IPR036986">
    <property type="entry name" value="S4_RNA-bd_sf"/>
</dbReference>
<dbReference type="NCBIfam" id="NF003717">
    <property type="entry name" value="PRK05327.1"/>
    <property type="match status" value="1"/>
</dbReference>
<dbReference type="NCBIfam" id="TIGR01017">
    <property type="entry name" value="rpsD_bact"/>
    <property type="match status" value="1"/>
</dbReference>
<dbReference type="PANTHER" id="PTHR11831">
    <property type="entry name" value="30S 40S RIBOSOMAL PROTEIN"/>
    <property type="match status" value="1"/>
</dbReference>
<dbReference type="PANTHER" id="PTHR11831:SF4">
    <property type="entry name" value="SMALL RIBOSOMAL SUBUNIT PROTEIN US4M"/>
    <property type="match status" value="1"/>
</dbReference>
<dbReference type="Pfam" id="PF00163">
    <property type="entry name" value="Ribosomal_S4"/>
    <property type="match status" value="1"/>
</dbReference>
<dbReference type="Pfam" id="PF01479">
    <property type="entry name" value="S4"/>
    <property type="match status" value="1"/>
</dbReference>
<dbReference type="SMART" id="SM01390">
    <property type="entry name" value="Ribosomal_S4"/>
    <property type="match status" value="1"/>
</dbReference>
<dbReference type="SMART" id="SM00363">
    <property type="entry name" value="S4"/>
    <property type="match status" value="1"/>
</dbReference>
<dbReference type="SUPFAM" id="SSF55174">
    <property type="entry name" value="Alpha-L RNA-binding motif"/>
    <property type="match status" value="1"/>
</dbReference>
<dbReference type="PROSITE" id="PS00632">
    <property type="entry name" value="RIBOSOMAL_S4"/>
    <property type="match status" value="1"/>
</dbReference>
<dbReference type="PROSITE" id="PS50889">
    <property type="entry name" value="S4"/>
    <property type="match status" value="1"/>
</dbReference>
<keyword id="KW-0150">Chloroplast</keyword>
<keyword id="KW-0934">Plastid</keyword>
<keyword id="KW-0687">Ribonucleoprotein</keyword>
<keyword id="KW-0689">Ribosomal protein</keyword>
<keyword id="KW-0694">RNA-binding</keyword>
<keyword id="KW-0699">rRNA-binding</keyword>
<name>RR4_ROSCP</name>
<feature type="chain" id="PRO_0000132548" description="Small ribosomal subunit protein uS4c">
    <location>
        <begin position="1"/>
        <end position="202"/>
    </location>
</feature>
<feature type="domain" description="S4 RNA-binding">
    <location>
        <begin position="90"/>
        <end position="153"/>
    </location>
</feature>
<comment type="function">
    <text evidence="1">One of the primary rRNA binding proteins, it binds directly to 16S rRNA where it nucleates assembly of the body of the 30S subunit.</text>
</comment>
<comment type="function">
    <text evidence="1">With S5 and S12 plays an important role in translational accuracy.</text>
</comment>
<comment type="subunit">
    <text evidence="1">Part of the 30S ribosomal subunit. Contacts protein S5. The interaction surface between S4 and S5 is involved in control of translational fidelity (By similarity).</text>
</comment>
<comment type="subcellular location">
    <subcellularLocation>
        <location>Plastid</location>
        <location>Chloroplast</location>
    </subcellularLocation>
</comment>
<comment type="similarity">
    <text evidence="2">Belongs to the universal ribosomal protein uS4 family.</text>
</comment>
<proteinExistence type="inferred from homology"/>
<protein>
    <recommendedName>
        <fullName evidence="2">Small ribosomal subunit protein uS4c</fullName>
    </recommendedName>
    <alternativeName>
        <fullName>30S ribosomal protein S4, chloroplastic</fullName>
    </alternativeName>
</protein>